<protein>
    <recommendedName>
        <fullName>Mitochondrial substrate carrier family protein V</fullName>
    </recommendedName>
</protein>
<dbReference type="EMBL" id="AAFI02000014">
    <property type="protein sequence ID" value="EAL69430.1"/>
    <property type="molecule type" value="Genomic_DNA"/>
</dbReference>
<dbReference type="RefSeq" id="XP_643352.1">
    <property type="nucleotide sequence ID" value="XM_638260.1"/>
</dbReference>
<dbReference type="SMR" id="Q551X6"/>
<dbReference type="STRING" id="44689.Q551X6"/>
<dbReference type="PaxDb" id="44689-DDB0234111"/>
<dbReference type="EnsemblProtists" id="EAL69430">
    <property type="protein sequence ID" value="EAL69430"/>
    <property type="gene ID" value="DDB_G0276261"/>
</dbReference>
<dbReference type="GeneID" id="8620402"/>
<dbReference type="KEGG" id="ddi:DDB_G0276261"/>
<dbReference type="dictyBase" id="DDB_G0276261">
    <property type="gene designation" value="mcfV"/>
</dbReference>
<dbReference type="VEuPathDB" id="AmoebaDB:DDB_G0276261"/>
<dbReference type="eggNOG" id="KOG0752">
    <property type="taxonomic scope" value="Eukaryota"/>
</dbReference>
<dbReference type="HOGENOM" id="CLU_552649_0_0_1"/>
<dbReference type="InParanoid" id="Q551X6"/>
<dbReference type="OMA" id="TMTVCYP"/>
<dbReference type="PhylomeDB" id="Q551X6"/>
<dbReference type="PRO" id="PR:Q551X6"/>
<dbReference type="Proteomes" id="UP000002195">
    <property type="component" value="Chromosome 2"/>
</dbReference>
<dbReference type="GO" id="GO:0005743">
    <property type="term" value="C:mitochondrial inner membrane"/>
    <property type="evidence" value="ECO:0007669"/>
    <property type="project" value="UniProtKB-SubCell"/>
</dbReference>
<dbReference type="GO" id="GO:0015215">
    <property type="term" value="F:nucleotide transmembrane transporter activity"/>
    <property type="evidence" value="ECO:0000318"/>
    <property type="project" value="GO_Central"/>
</dbReference>
<dbReference type="GO" id="GO:0051503">
    <property type="term" value="P:adenine nucleotide transport"/>
    <property type="evidence" value="ECO:0000318"/>
    <property type="project" value="GO_Central"/>
</dbReference>
<dbReference type="Gene3D" id="1.50.40.10">
    <property type="entry name" value="Mitochondrial carrier domain"/>
    <property type="match status" value="1"/>
</dbReference>
<dbReference type="InterPro" id="IPR002067">
    <property type="entry name" value="Mit_carrier"/>
</dbReference>
<dbReference type="InterPro" id="IPR018108">
    <property type="entry name" value="Mitochondrial_sb/sol_carrier"/>
</dbReference>
<dbReference type="InterPro" id="IPR023395">
    <property type="entry name" value="Mt_carrier_dom_sf"/>
</dbReference>
<dbReference type="PANTHER" id="PTHR24089">
    <property type="entry name" value="SOLUTE CARRIER FAMILY 25"/>
    <property type="match status" value="1"/>
</dbReference>
<dbReference type="Pfam" id="PF00153">
    <property type="entry name" value="Mito_carr"/>
    <property type="match status" value="3"/>
</dbReference>
<dbReference type="PRINTS" id="PR00926">
    <property type="entry name" value="MITOCARRIER"/>
</dbReference>
<dbReference type="SUPFAM" id="SSF103506">
    <property type="entry name" value="Mitochondrial carrier"/>
    <property type="match status" value="1"/>
</dbReference>
<dbReference type="PROSITE" id="PS50920">
    <property type="entry name" value="SOLCAR"/>
    <property type="match status" value="3"/>
</dbReference>
<gene>
    <name type="primary">mcfV</name>
    <name type="ORF">DDB_G0276261</name>
</gene>
<comment type="function">
    <text evidence="1">Mitochondrial solute carriers shuttle metabolites, nucleotides, and cofactors through the mitochondrial inner membrane.</text>
</comment>
<comment type="subcellular location">
    <subcellularLocation>
        <location evidence="1">Mitochondrion inner membrane</location>
        <topology evidence="1">Multi-pass membrane protein</topology>
    </subcellularLocation>
</comment>
<comment type="similarity">
    <text evidence="4">Belongs to the mitochondrial carrier (TC 2.A.29) family.</text>
</comment>
<evidence type="ECO:0000250" key="1"/>
<evidence type="ECO:0000255" key="2"/>
<evidence type="ECO:0000256" key="3">
    <source>
        <dbReference type="SAM" id="MobiDB-lite"/>
    </source>
</evidence>
<evidence type="ECO:0000305" key="4"/>
<name>MCFV_DICDI</name>
<keyword id="KW-0472">Membrane</keyword>
<keyword id="KW-0496">Mitochondrion</keyword>
<keyword id="KW-0999">Mitochondrion inner membrane</keyword>
<keyword id="KW-1185">Reference proteome</keyword>
<keyword id="KW-0677">Repeat</keyword>
<keyword id="KW-0812">Transmembrane</keyword>
<keyword id="KW-1133">Transmembrane helix</keyword>
<keyword id="KW-0813">Transport</keyword>
<accession>Q551X6</accession>
<accession>Q1MVR0</accession>
<organism>
    <name type="scientific">Dictyostelium discoideum</name>
    <name type="common">Social amoeba</name>
    <dbReference type="NCBI Taxonomy" id="44689"/>
    <lineage>
        <taxon>Eukaryota</taxon>
        <taxon>Amoebozoa</taxon>
        <taxon>Evosea</taxon>
        <taxon>Eumycetozoa</taxon>
        <taxon>Dictyostelia</taxon>
        <taxon>Dictyosteliales</taxon>
        <taxon>Dictyosteliaceae</taxon>
        <taxon>Dictyostelium</taxon>
    </lineage>
</organism>
<feature type="chain" id="PRO_0000385528" description="Mitochondrial substrate carrier family protein V">
    <location>
        <begin position="1"/>
        <end position="527"/>
    </location>
</feature>
<feature type="topological domain" description="Mitochondrial intermembrane" evidence="1">
    <location>
        <begin position="1"/>
        <end position="132"/>
    </location>
</feature>
<feature type="transmembrane region" description="Helical; Name=1" evidence="2">
    <location>
        <begin position="133"/>
        <end position="153"/>
    </location>
</feature>
<feature type="topological domain" description="Mitochondrial matrix" evidence="1">
    <location>
        <begin position="154"/>
        <end position="187"/>
    </location>
</feature>
<feature type="transmembrane region" description="Helical; Name=2" evidence="2">
    <location>
        <begin position="188"/>
        <end position="208"/>
    </location>
</feature>
<feature type="topological domain" description="Mitochondrial intermembrane" evidence="1">
    <location>
        <begin position="209"/>
        <end position="258"/>
    </location>
</feature>
<feature type="transmembrane region" description="Helical; Name=3" evidence="2">
    <location>
        <begin position="259"/>
        <end position="279"/>
    </location>
</feature>
<feature type="topological domain" description="Mitochondrial matrix" evidence="1">
    <location>
        <begin position="280"/>
        <end position="324"/>
    </location>
</feature>
<feature type="transmembrane region" description="Helical; Name=4" evidence="2">
    <location>
        <begin position="325"/>
        <end position="345"/>
    </location>
</feature>
<feature type="topological domain" description="Mitochondrial intermembrane" evidence="1">
    <location>
        <begin position="346"/>
        <end position="435"/>
    </location>
</feature>
<feature type="transmembrane region" description="Helical; Name=5" evidence="2">
    <location>
        <begin position="436"/>
        <end position="456"/>
    </location>
</feature>
<feature type="topological domain" description="Mitochondrial matrix" evidence="1">
    <location>
        <begin position="457"/>
        <end position="487"/>
    </location>
</feature>
<feature type="transmembrane region" description="Helical; Name=6" evidence="2">
    <location>
        <begin position="488"/>
        <end position="508"/>
    </location>
</feature>
<feature type="topological domain" description="Mitochondrial intermembrane" evidence="1">
    <location>
        <begin position="509"/>
        <end position="527"/>
    </location>
</feature>
<feature type="repeat" description="Solcar 1">
    <location>
        <begin position="130"/>
        <end position="220"/>
    </location>
</feature>
<feature type="repeat" description="Solcar 2">
    <location>
        <begin position="253"/>
        <end position="345"/>
    </location>
</feature>
<feature type="repeat" description="Solcar 3">
    <location>
        <begin position="430"/>
        <end position="519"/>
    </location>
</feature>
<feature type="region of interest" description="Disordered" evidence="3">
    <location>
        <begin position="1"/>
        <end position="29"/>
    </location>
</feature>
<feature type="compositionally biased region" description="Basic and acidic residues" evidence="3">
    <location>
        <begin position="1"/>
        <end position="14"/>
    </location>
</feature>
<feature type="compositionally biased region" description="Polar residues" evidence="3">
    <location>
        <begin position="15"/>
        <end position="29"/>
    </location>
</feature>
<sequence>MNSSDFKKSFKESTENNSNTYRPSKTLNTYKSLKNGNNIANSLIIQLNNNVNNNLNKEKLIKSNNNKLLNLNNNNKNNNNNNINNNNNLISKNGILNNIIKNENQNKILKGNNKNNSNSKLDVSKKSISKENVNYLVSGSIAGAISRSATAGFERLTIIQQVQGMSQNLSQGYVGCIAAMKEMVKREGFKSIWKGNGANIVKVSPNSGIRFLTYEFCKKHFLDNSSNHPSSSSIENGIDGNGVGCGSGSEMKMTVPQTMFSGAMAGLTSTFFTYPLDVVRIRLSLQGSCSNDYAAHRYNGITHSFFKIHKDEGVKGLYKGLGTSIASIVPWVSISFATYEGFKIICKKMILNYQISSSSLSTTTTTPSSINNNNNNNNKNNNSFIYENELGENGINLTNTSGCSTMASTMPSSLLINSVASDENELKKGVNMICDFVCGALSGAVTMTVCYPLDVLRRRMMIQGIGGNKVLYKNGWDATKKILSNEGLVAFYHGIIPAYFKVVPTVAISFAVYEICKDLGSNKYQQK</sequence>
<proteinExistence type="inferred from homology"/>
<reference key="1">
    <citation type="journal article" date="2002" name="Nature">
        <title>Sequence and analysis of chromosome 2 of Dictyostelium discoideum.</title>
        <authorList>
            <person name="Gloeckner G."/>
            <person name="Eichinger L."/>
            <person name="Szafranski K."/>
            <person name="Pachebat J.A."/>
            <person name="Bankier A.T."/>
            <person name="Dear P.H."/>
            <person name="Lehmann R."/>
            <person name="Baumgart C."/>
            <person name="Parra G."/>
            <person name="Abril J.F."/>
            <person name="Guigo R."/>
            <person name="Kumpf K."/>
            <person name="Tunggal B."/>
            <person name="Cox E.C."/>
            <person name="Quail M.A."/>
            <person name="Platzer M."/>
            <person name="Rosenthal A."/>
            <person name="Noegel A.A."/>
        </authorList>
    </citation>
    <scope>NUCLEOTIDE SEQUENCE [LARGE SCALE GENOMIC DNA]</scope>
    <source>
        <strain>AX4</strain>
    </source>
</reference>
<reference key="2">
    <citation type="journal article" date="2005" name="Nature">
        <title>The genome of the social amoeba Dictyostelium discoideum.</title>
        <authorList>
            <person name="Eichinger L."/>
            <person name="Pachebat J.A."/>
            <person name="Gloeckner G."/>
            <person name="Rajandream M.A."/>
            <person name="Sucgang R."/>
            <person name="Berriman M."/>
            <person name="Song J."/>
            <person name="Olsen R."/>
            <person name="Szafranski K."/>
            <person name="Xu Q."/>
            <person name="Tunggal B."/>
            <person name="Kummerfeld S."/>
            <person name="Madera M."/>
            <person name="Konfortov B.A."/>
            <person name="Rivero F."/>
            <person name="Bankier A.T."/>
            <person name="Lehmann R."/>
            <person name="Hamlin N."/>
            <person name="Davies R."/>
            <person name="Gaudet P."/>
            <person name="Fey P."/>
            <person name="Pilcher K."/>
            <person name="Chen G."/>
            <person name="Saunders D."/>
            <person name="Sodergren E.J."/>
            <person name="Davis P."/>
            <person name="Kerhornou A."/>
            <person name="Nie X."/>
            <person name="Hall N."/>
            <person name="Anjard C."/>
            <person name="Hemphill L."/>
            <person name="Bason N."/>
            <person name="Farbrother P."/>
            <person name="Desany B."/>
            <person name="Just E."/>
            <person name="Morio T."/>
            <person name="Rost R."/>
            <person name="Churcher C.M."/>
            <person name="Cooper J."/>
            <person name="Haydock S."/>
            <person name="van Driessche N."/>
            <person name="Cronin A."/>
            <person name="Goodhead I."/>
            <person name="Muzny D.M."/>
            <person name="Mourier T."/>
            <person name="Pain A."/>
            <person name="Lu M."/>
            <person name="Harper D."/>
            <person name="Lindsay R."/>
            <person name="Hauser H."/>
            <person name="James K.D."/>
            <person name="Quiles M."/>
            <person name="Madan Babu M."/>
            <person name="Saito T."/>
            <person name="Buchrieser C."/>
            <person name="Wardroper A."/>
            <person name="Felder M."/>
            <person name="Thangavelu M."/>
            <person name="Johnson D."/>
            <person name="Knights A."/>
            <person name="Loulseged H."/>
            <person name="Mungall K.L."/>
            <person name="Oliver K."/>
            <person name="Price C."/>
            <person name="Quail M.A."/>
            <person name="Urushihara H."/>
            <person name="Hernandez J."/>
            <person name="Rabbinowitsch E."/>
            <person name="Steffen D."/>
            <person name="Sanders M."/>
            <person name="Ma J."/>
            <person name="Kohara Y."/>
            <person name="Sharp S."/>
            <person name="Simmonds M.N."/>
            <person name="Spiegler S."/>
            <person name="Tivey A."/>
            <person name="Sugano S."/>
            <person name="White B."/>
            <person name="Walker D."/>
            <person name="Woodward J.R."/>
            <person name="Winckler T."/>
            <person name="Tanaka Y."/>
            <person name="Shaulsky G."/>
            <person name="Schleicher M."/>
            <person name="Weinstock G.M."/>
            <person name="Rosenthal A."/>
            <person name="Cox E.C."/>
            <person name="Chisholm R.L."/>
            <person name="Gibbs R.A."/>
            <person name="Loomis W.F."/>
            <person name="Platzer M."/>
            <person name="Kay R.R."/>
            <person name="Williams J.G."/>
            <person name="Dear P.H."/>
            <person name="Noegel A.A."/>
            <person name="Barrell B.G."/>
            <person name="Kuspa A."/>
        </authorList>
    </citation>
    <scope>NUCLEOTIDE SEQUENCE [LARGE SCALE GENOMIC DNA]</scope>
    <source>
        <strain>AX4</strain>
    </source>
</reference>
<reference key="3">
    <citation type="journal article" date="2007" name="Biochimie">
        <title>Mitochondrial carrier family: repertoire and peculiarities of the cellular slime mould Dictyostelium discoideum.</title>
        <authorList>
            <person name="Satre M."/>
            <person name="Mattei S."/>
            <person name="Aubry L."/>
            <person name="Gaudet P."/>
            <person name="Pelosi L."/>
            <person name="Brandolin G."/>
            <person name="Klein G."/>
        </authorList>
    </citation>
    <scope>REVIEW</scope>
</reference>